<evidence type="ECO:0000255" key="1"/>
<evidence type="ECO:0000305" key="2"/>
<keyword id="KW-0020">Allergen</keyword>
<keyword id="KW-0677">Repeat</keyword>
<keyword id="KW-0732">Signal</keyword>
<accession>P22285</accession>
<reference key="1">
    <citation type="journal article" date="1991" name="J. Biol. Chem.">
        <title>Nucleotide sequence analysis of three cDNAs coding for Poa p IX isoallergens of Kentucky bluegrass pollen.</title>
        <authorList>
            <person name="Silvanovich A."/>
            <person name="Astwood J."/>
            <person name="Zhang L."/>
            <person name="Olsen E."/>
            <person name="Kisil F.T."/>
            <person name="Sehon A.H."/>
            <person name="Mohapatra S.S."/>
            <person name="Hill R.D."/>
        </authorList>
    </citation>
    <scope>NUCLEOTIDE SEQUENCE [MRNA]</scope>
    <source>
        <tissue>Pollen</tissue>
    </source>
</reference>
<reference key="2">
    <citation type="journal article" date="1991" name="J. Immunol.">
        <title>Identification and characterization of the Poa p IX group of basic allergens of Kentucky bluegrass pollen.</title>
        <authorList>
            <person name="Olsen E."/>
            <person name="Zhang L."/>
            <person name="Hill R.D."/>
            <person name="Kisil F.T."/>
            <person name="Sehon A.H."/>
            <person name="Mohapatra S.S."/>
        </authorList>
    </citation>
    <scope>CHARACTERIZATION</scope>
</reference>
<dbReference type="EMBL" id="M38343">
    <property type="protein sequence ID" value="AAA63456.1"/>
    <property type="molecule type" value="mRNA"/>
</dbReference>
<dbReference type="PIR" id="A39098">
    <property type="entry name" value="A39098"/>
</dbReference>
<dbReference type="SMR" id="P22285"/>
<dbReference type="Allergome" id="581">
    <property type="allergen name" value="Poa p 5"/>
</dbReference>
<dbReference type="CDD" id="cd12805">
    <property type="entry name" value="Allergen_V_VI"/>
    <property type="match status" value="1"/>
</dbReference>
<dbReference type="Gene3D" id="1.20.120.320">
    <property type="entry name" value="Group V grass pollen allergen"/>
    <property type="match status" value="2"/>
</dbReference>
<dbReference type="InterPro" id="IPR002914">
    <property type="entry name" value="Poa_pIX/Phl_pVI"/>
</dbReference>
<dbReference type="InterPro" id="IPR035506">
    <property type="entry name" value="Pollen_allergen/Os"/>
</dbReference>
<dbReference type="Pfam" id="PF01620">
    <property type="entry name" value="Pollen_allerg_2"/>
    <property type="match status" value="1"/>
</dbReference>
<dbReference type="PRINTS" id="PR00833">
    <property type="entry name" value="POAALLERGEN"/>
</dbReference>
<dbReference type="SUPFAM" id="SSF81736">
    <property type="entry name" value="Group V grass pollen allergen"/>
    <property type="match status" value="2"/>
</dbReference>
<sequence length="333" mass="32661">MAVHQYTVALFLAVALVAGPAASYAADVGYGAPATLATPATPAAPAAGYTPAAPAGAAPKATTDEQKLIEKINAGFKAAVAAAAGVPAVDKYKTFVATFGTASNKAFAEALSTEPKGAAAASSNAVLTSKLDAAYKLAYKSAEGATPEAKYDAYVATLSEALRIIAGTLEVHAVKPAGEEVKAIPAGELQVIDKVDAAFKVAATAANAAPANDKFTVFEAAFNDAIKASTGGAYQSYKFIPALEAAVKQSYAATVATAPAVKYTVFETALKKAITAMSQAQKAAKPAAAVTATATGAVGAATGAVGAATGAATAAAGGYKTGAATPTAGGYKV</sequence>
<comment type="tissue specificity">
    <text>Pollen.</text>
</comment>
<comment type="allergen">
    <text>Causes an allergic reaction in human.</text>
</comment>
<comment type="miscellaneous">
    <text>Its C-terminus might be membrane-associated.</text>
</comment>
<comment type="similarity">
    <text evidence="2">Belongs to the Poa p IX/Phl p VI allergen family.</text>
</comment>
<name>MPA92_POAPR</name>
<protein>
    <recommendedName>
        <fullName>Pollen allergen KBG 41</fullName>
    </recommendedName>
    <alternativeName>
        <fullName>Allergen Poa p IX</fullName>
    </alternativeName>
    <alternativeName>
        <fullName>Pollen allergen Poa p 9</fullName>
    </alternativeName>
    <allergenName>Poa p 9</allergenName>
</protein>
<feature type="signal peptide" evidence="1">
    <location>
        <begin position="1"/>
        <end position="23"/>
    </location>
</feature>
<feature type="chain" id="PRO_0000021748" description="Pollen allergen KBG 41">
    <location>
        <begin position="24"/>
        <end position="333"/>
    </location>
</feature>
<feature type="repeat" description="1">
    <location>
        <begin position="309"/>
        <end position="320"/>
    </location>
</feature>
<feature type="repeat" description="2">
    <location>
        <begin position="321"/>
        <end position="332"/>
    </location>
</feature>
<feature type="region of interest" description="2 X 12 AA tandem repeats">
    <location>
        <begin position="309"/>
        <end position="332"/>
    </location>
</feature>
<organism>
    <name type="scientific">Poa pratensis</name>
    <name type="common">Kentucky bluegrass</name>
    <name type="synonym">Phalaris japonica</name>
    <dbReference type="NCBI Taxonomy" id="4545"/>
    <lineage>
        <taxon>Eukaryota</taxon>
        <taxon>Viridiplantae</taxon>
        <taxon>Streptophyta</taxon>
        <taxon>Embryophyta</taxon>
        <taxon>Tracheophyta</taxon>
        <taxon>Spermatophyta</taxon>
        <taxon>Magnoliopsida</taxon>
        <taxon>Liliopsida</taxon>
        <taxon>Poales</taxon>
        <taxon>Poaceae</taxon>
        <taxon>BOP clade</taxon>
        <taxon>Pooideae</taxon>
        <taxon>Poodae</taxon>
        <taxon>Poeae</taxon>
        <taxon>Poeae Chloroplast Group 2 (Poeae type)</taxon>
        <taxon>Poodinae</taxon>
        <taxon>Poinae</taxon>
        <taxon>Poa</taxon>
    </lineage>
</organism>
<proteinExistence type="evidence at protein level"/>